<gene>
    <name evidence="1" type="primary">csrA</name>
    <name type="ordered locus">Dvul_2420</name>
</gene>
<proteinExistence type="inferred from homology"/>
<evidence type="ECO:0000255" key="1">
    <source>
        <dbReference type="HAMAP-Rule" id="MF_00167"/>
    </source>
</evidence>
<name>CSRA_NITV4</name>
<keyword id="KW-1005">Bacterial flagellum biogenesis</keyword>
<keyword id="KW-0963">Cytoplasm</keyword>
<keyword id="KW-0678">Repressor</keyword>
<keyword id="KW-0694">RNA-binding</keyword>
<keyword id="KW-0810">Translation regulation</keyword>
<feature type="chain" id="PRO_1000023378" description="Translational regulator CsrA">
    <location>
        <begin position="1"/>
        <end position="78"/>
    </location>
</feature>
<comment type="function">
    <text evidence="1">A translational regulator that binds mRNA to regulate translation initiation and/or mRNA stability. Usually binds in the 5'-UTR at or near the Shine-Dalgarno sequence preventing ribosome-binding, thus repressing translation. Its main target seems to be the major flagellin gene, while its function is anatagonized by FliW.</text>
</comment>
<comment type="subunit">
    <text evidence="1">Homodimer; the beta-strands of each monomer intercalate to form a hydrophobic core, while the alpha-helices form wings that extend away from the core.</text>
</comment>
<comment type="subcellular location">
    <subcellularLocation>
        <location evidence="1">Cytoplasm</location>
    </subcellularLocation>
</comment>
<comment type="similarity">
    <text evidence="1">Belongs to the CsrA/RsmA family.</text>
</comment>
<organism>
    <name type="scientific">Nitratidesulfovibrio vulgaris (strain DP4)</name>
    <name type="common">Desulfovibrio vulgaris</name>
    <dbReference type="NCBI Taxonomy" id="391774"/>
    <lineage>
        <taxon>Bacteria</taxon>
        <taxon>Pseudomonadati</taxon>
        <taxon>Thermodesulfobacteriota</taxon>
        <taxon>Desulfovibrionia</taxon>
        <taxon>Desulfovibrionales</taxon>
        <taxon>Desulfovibrionaceae</taxon>
        <taxon>Nitratidesulfovibrio</taxon>
    </lineage>
</organism>
<sequence length="78" mass="8815">MLILTRKAGESLHLGDDIRITVLGIQGKQVKIGIEVPGDMVVYREEVYRRVIEENRMALDISNADLLAATKIWHGRTK</sequence>
<dbReference type="EMBL" id="CP000527">
    <property type="protein sequence ID" value="ABM29436.1"/>
    <property type="molecule type" value="Genomic_DNA"/>
</dbReference>
<dbReference type="RefSeq" id="WP_010937827.1">
    <property type="nucleotide sequence ID" value="NC_008751.1"/>
</dbReference>
<dbReference type="SMR" id="A1VG70"/>
<dbReference type="KEGG" id="dvl:Dvul_2420"/>
<dbReference type="HOGENOM" id="CLU_164837_0_2_7"/>
<dbReference type="Proteomes" id="UP000009173">
    <property type="component" value="Chromosome"/>
</dbReference>
<dbReference type="GO" id="GO:0005829">
    <property type="term" value="C:cytosol"/>
    <property type="evidence" value="ECO:0007669"/>
    <property type="project" value="TreeGrafter"/>
</dbReference>
<dbReference type="GO" id="GO:0048027">
    <property type="term" value="F:mRNA 5'-UTR binding"/>
    <property type="evidence" value="ECO:0007669"/>
    <property type="project" value="UniProtKB-UniRule"/>
</dbReference>
<dbReference type="GO" id="GO:0044781">
    <property type="term" value="P:bacterial-type flagellum organization"/>
    <property type="evidence" value="ECO:0007669"/>
    <property type="project" value="UniProtKB-KW"/>
</dbReference>
<dbReference type="GO" id="GO:0006402">
    <property type="term" value="P:mRNA catabolic process"/>
    <property type="evidence" value="ECO:0007669"/>
    <property type="project" value="InterPro"/>
</dbReference>
<dbReference type="GO" id="GO:0045947">
    <property type="term" value="P:negative regulation of translational initiation"/>
    <property type="evidence" value="ECO:0007669"/>
    <property type="project" value="UniProtKB-UniRule"/>
</dbReference>
<dbReference type="GO" id="GO:1902208">
    <property type="term" value="P:regulation of bacterial-type flagellum assembly"/>
    <property type="evidence" value="ECO:0007669"/>
    <property type="project" value="UniProtKB-UniRule"/>
</dbReference>
<dbReference type="GO" id="GO:0006109">
    <property type="term" value="P:regulation of carbohydrate metabolic process"/>
    <property type="evidence" value="ECO:0007669"/>
    <property type="project" value="InterPro"/>
</dbReference>
<dbReference type="Gene3D" id="2.60.40.4380">
    <property type="entry name" value="Translational regulator CsrA"/>
    <property type="match status" value="1"/>
</dbReference>
<dbReference type="HAMAP" id="MF_00167">
    <property type="entry name" value="CsrA"/>
    <property type="match status" value="1"/>
</dbReference>
<dbReference type="InterPro" id="IPR003751">
    <property type="entry name" value="CsrA"/>
</dbReference>
<dbReference type="InterPro" id="IPR036107">
    <property type="entry name" value="CsrA_sf"/>
</dbReference>
<dbReference type="NCBIfam" id="TIGR00202">
    <property type="entry name" value="csrA"/>
    <property type="match status" value="1"/>
</dbReference>
<dbReference type="NCBIfam" id="NF002469">
    <property type="entry name" value="PRK01712.1"/>
    <property type="match status" value="1"/>
</dbReference>
<dbReference type="PANTHER" id="PTHR34984">
    <property type="entry name" value="CARBON STORAGE REGULATOR"/>
    <property type="match status" value="1"/>
</dbReference>
<dbReference type="PANTHER" id="PTHR34984:SF1">
    <property type="entry name" value="CARBON STORAGE REGULATOR"/>
    <property type="match status" value="1"/>
</dbReference>
<dbReference type="Pfam" id="PF02599">
    <property type="entry name" value="CsrA"/>
    <property type="match status" value="1"/>
</dbReference>
<dbReference type="SUPFAM" id="SSF117130">
    <property type="entry name" value="CsrA-like"/>
    <property type="match status" value="1"/>
</dbReference>
<reference key="1">
    <citation type="journal article" date="2009" name="Environ. Microbiol.">
        <title>Contribution of mobile genetic elements to Desulfovibrio vulgaris genome plasticity.</title>
        <authorList>
            <person name="Walker C.B."/>
            <person name="Stolyar S."/>
            <person name="Chivian D."/>
            <person name="Pinel N."/>
            <person name="Gabster J.A."/>
            <person name="Dehal P.S."/>
            <person name="He Z."/>
            <person name="Yang Z.K."/>
            <person name="Yen H.C."/>
            <person name="Zhou J."/>
            <person name="Wall J.D."/>
            <person name="Hazen T.C."/>
            <person name="Arkin A.P."/>
            <person name="Stahl D.A."/>
        </authorList>
    </citation>
    <scope>NUCLEOTIDE SEQUENCE [LARGE SCALE GENOMIC DNA]</scope>
    <source>
        <strain>DP4</strain>
    </source>
</reference>
<accession>A1VG70</accession>
<protein>
    <recommendedName>
        <fullName evidence="1">Translational regulator CsrA</fullName>
    </recommendedName>
</protein>